<evidence type="ECO:0000250" key="1">
    <source>
        <dbReference type="UniProtKB" id="P55058"/>
    </source>
</evidence>
<evidence type="ECO:0000255" key="2"/>
<evidence type="ECO:0000269" key="3">
    <source>
    </source>
</evidence>
<evidence type="ECO:0000269" key="4">
    <source>
    </source>
</evidence>
<evidence type="ECO:0000269" key="5">
    <source>
    </source>
</evidence>
<evidence type="ECO:0000269" key="6">
    <source>
    </source>
</evidence>
<evidence type="ECO:0000305" key="7"/>
<evidence type="ECO:0000305" key="8">
    <source>
    </source>
</evidence>
<evidence type="ECO:0000305" key="9">
    <source>
    </source>
</evidence>
<dbReference type="EMBL" id="U37226">
    <property type="protein sequence ID" value="AAA80542.1"/>
    <property type="molecule type" value="mRNA"/>
</dbReference>
<dbReference type="EMBL" id="U28960">
    <property type="protein sequence ID" value="AAA87943.1"/>
    <property type="molecule type" value="mRNA"/>
</dbReference>
<dbReference type="EMBL" id="BC003782">
    <property type="protein sequence ID" value="AAH03782.1"/>
    <property type="molecule type" value="mRNA"/>
</dbReference>
<dbReference type="CCDS" id="CCDS17063.1"/>
<dbReference type="PIR" id="I49370">
    <property type="entry name" value="I49370"/>
</dbReference>
<dbReference type="RefSeq" id="NP_001407621.1">
    <property type="nucleotide sequence ID" value="NM_001420692.1"/>
</dbReference>
<dbReference type="RefSeq" id="NP_035255.1">
    <property type="nucleotide sequence ID" value="NM_011125.3"/>
</dbReference>
<dbReference type="SMR" id="P55065"/>
<dbReference type="BioGRID" id="202259">
    <property type="interactions" value="1"/>
</dbReference>
<dbReference type="FunCoup" id="P55065">
    <property type="interactions" value="129"/>
</dbReference>
<dbReference type="STRING" id="10090.ENSMUSP00000104939"/>
<dbReference type="SwissLipids" id="SLP:000000471"/>
<dbReference type="GlyCosmos" id="P55065">
    <property type="glycosylation" value="7 sites, No reported glycans"/>
</dbReference>
<dbReference type="GlyGen" id="P55065">
    <property type="glycosylation" value="9 sites, 5 N-linked glycans (5 sites), 1 O-linked glycan (1 site)"/>
</dbReference>
<dbReference type="iPTMnet" id="P55065"/>
<dbReference type="PhosphoSitePlus" id="P55065"/>
<dbReference type="CPTAC" id="non-CPTAC-5613"/>
<dbReference type="CPTAC" id="non-CPTAC-5614"/>
<dbReference type="PaxDb" id="10090-ENSMUSP00000061519"/>
<dbReference type="PeptideAtlas" id="P55065"/>
<dbReference type="ProteomicsDB" id="289696"/>
<dbReference type="Antibodypedia" id="27873">
    <property type="antibodies" value="322 antibodies from 32 providers"/>
</dbReference>
<dbReference type="DNASU" id="18830"/>
<dbReference type="Ensembl" id="ENSMUST00000059954.14">
    <property type="protein sequence ID" value="ENSMUSP00000061519.8"/>
    <property type="gene ID" value="ENSMUSG00000017754.14"/>
</dbReference>
<dbReference type="Ensembl" id="ENSMUST00000109316.8">
    <property type="protein sequence ID" value="ENSMUSP00000104939.2"/>
    <property type="gene ID" value="ENSMUSG00000017754.14"/>
</dbReference>
<dbReference type="GeneID" id="18830"/>
<dbReference type="KEGG" id="mmu:18830"/>
<dbReference type="UCSC" id="uc008nwn.1">
    <property type="organism name" value="mouse"/>
</dbReference>
<dbReference type="AGR" id="MGI:103151"/>
<dbReference type="CTD" id="5360"/>
<dbReference type="MGI" id="MGI:103151">
    <property type="gene designation" value="Pltp"/>
</dbReference>
<dbReference type="VEuPathDB" id="HostDB:ENSMUSG00000017754"/>
<dbReference type="eggNOG" id="KOG4160">
    <property type="taxonomic scope" value="Eukaryota"/>
</dbReference>
<dbReference type="GeneTree" id="ENSGT01100000263546"/>
<dbReference type="InParanoid" id="P55065"/>
<dbReference type="OMA" id="TTGMRFF"/>
<dbReference type="OrthoDB" id="8862579at2759"/>
<dbReference type="PhylomeDB" id="P55065"/>
<dbReference type="TreeFam" id="TF315617"/>
<dbReference type="Reactome" id="R-MMU-8964058">
    <property type="pathway name" value="HDL remodeling"/>
</dbReference>
<dbReference type="BioGRID-ORCS" id="18830">
    <property type="hits" value="1 hit in 78 CRISPR screens"/>
</dbReference>
<dbReference type="ChiTaRS" id="Pltp">
    <property type="organism name" value="mouse"/>
</dbReference>
<dbReference type="PRO" id="PR:P55065"/>
<dbReference type="Proteomes" id="UP000000589">
    <property type="component" value="Chromosome 2"/>
</dbReference>
<dbReference type="RNAct" id="P55065">
    <property type="molecule type" value="protein"/>
</dbReference>
<dbReference type="Bgee" id="ENSMUSG00000017754">
    <property type="expression patterns" value="Expressed in pigmented layer of retina and 261 other cell types or tissues"/>
</dbReference>
<dbReference type="ExpressionAtlas" id="P55065">
    <property type="expression patterns" value="baseline and differential"/>
</dbReference>
<dbReference type="GO" id="GO:0005576">
    <property type="term" value="C:extracellular region"/>
    <property type="evidence" value="ECO:0000250"/>
    <property type="project" value="UniProtKB"/>
</dbReference>
<dbReference type="GO" id="GO:0005615">
    <property type="term" value="C:extracellular space"/>
    <property type="evidence" value="ECO:0007005"/>
    <property type="project" value="BHF-UCL"/>
</dbReference>
<dbReference type="GO" id="GO:0034364">
    <property type="term" value="C:high-density lipoprotein particle"/>
    <property type="evidence" value="ECO:0007669"/>
    <property type="project" value="Ensembl"/>
</dbReference>
<dbReference type="GO" id="GO:0005634">
    <property type="term" value="C:nucleus"/>
    <property type="evidence" value="ECO:0000250"/>
    <property type="project" value="UniProtKB"/>
</dbReference>
<dbReference type="GO" id="GO:0097001">
    <property type="term" value="F:ceramide binding"/>
    <property type="evidence" value="ECO:0007669"/>
    <property type="project" value="Ensembl"/>
</dbReference>
<dbReference type="GO" id="GO:0140340">
    <property type="term" value="F:cerebroside transfer activity"/>
    <property type="evidence" value="ECO:0007669"/>
    <property type="project" value="Ensembl"/>
</dbReference>
<dbReference type="GO" id="GO:0120020">
    <property type="term" value="F:cholesterol transfer activity"/>
    <property type="evidence" value="ECO:0000315"/>
    <property type="project" value="UniProtKB"/>
</dbReference>
<dbReference type="GO" id="GO:0140337">
    <property type="term" value="F:diacylglyceride transfer activity"/>
    <property type="evidence" value="ECO:0007669"/>
    <property type="project" value="Ensembl"/>
</dbReference>
<dbReference type="GO" id="GO:0019992">
    <property type="term" value="F:diacylglycerol binding"/>
    <property type="evidence" value="ECO:0007669"/>
    <property type="project" value="Ensembl"/>
</dbReference>
<dbReference type="GO" id="GO:0008035">
    <property type="term" value="F:high-density lipoprotein particle binding"/>
    <property type="evidence" value="ECO:0000250"/>
    <property type="project" value="UniProtKB"/>
</dbReference>
<dbReference type="GO" id="GO:0030169">
    <property type="term" value="F:low-density lipoprotein particle binding"/>
    <property type="evidence" value="ECO:0000250"/>
    <property type="project" value="UniProtKB"/>
</dbReference>
<dbReference type="GO" id="GO:0070300">
    <property type="term" value="F:phosphatidic acid binding"/>
    <property type="evidence" value="ECO:0007669"/>
    <property type="project" value="Ensembl"/>
</dbReference>
<dbReference type="GO" id="GO:1990050">
    <property type="term" value="F:phosphatidic acid transfer activity"/>
    <property type="evidence" value="ECO:0007669"/>
    <property type="project" value="Ensembl"/>
</dbReference>
<dbReference type="GO" id="GO:0031210">
    <property type="term" value="F:phosphatidylcholine binding"/>
    <property type="evidence" value="ECO:0007669"/>
    <property type="project" value="Ensembl"/>
</dbReference>
<dbReference type="GO" id="GO:0120019">
    <property type="term" value="F:phosphatidylcholine transfer activity"/>
    <property type="evidence" value="ECO:0000315"/>
    <property type="project" value="UniProtKB"/>
</dbReference>
<dbReference type="GO" id="GO:0008429">
    <property type="term" value="F:phosphatidylethanolamine binding"/>
    <property type="evidence" value="ECO:0007669"/>
    <property type="project" value="Ensembl"/>
</dbReference>
<dbReference type="GO" id="GO:1904121">
    <property type="term" value="F:phosphatidylethanolamine transfer activity"/>
    <property type="evidence" value="ECO:0000315"/>
    <property type="project" value="UniProtKB"/>
</dbReference>
<dbReference type="GO" id="GO:1901611">
    <property type="term" value="F:phosphatidylglycerol binding"/>
    <property type="evidence" value="ECO:0007669"/>
    <property type="project" value="Ensembl"/>
</dbReference>
<dbReference type="GO" id="GO:0140339">
    <property type="term" value="F:phosphatidylglycerol transfer activity"/>
    <property type="evidence" value="ECO:0007669"/>
    <property type="project" value="Ensembl"/>
</dbReference>
<dbReference type="GO" id="GO:0008526">
    <property type="term" value="F:phosphatidylinositol transfer activity"/>
    <property type="evidence" value="ECO:0000315"/>
    <property type="project" value="UniProtKB"/>
</dbReference>
<dbReference type="GO" id="GO:0120014">
    <property type="term" value="F:phospholipid transfer activity"/>
    <property type="evidence" value="ECO:0000314"/>
    <property type="project" value="UniProtKB"/>
</dbReference>
<dbReference type="GO" id="GO:0140338">
    <property type="term" value="F:sphingomyelin transfer activity"/>
    <property type="evidence" value="ECO:0000315"/>
    <property type="project" value="UniProtKB"/>
</dbReference>
<dbReference type="GO" id="GO:0034189">
    <property type="term" value="F:very-low-density lipoprotein particle binding"/>
    <property type="evidence" value="ECO:0000250"/>
    <property type="project" value="UniProtKB"/>
</dbReference>
<dbReference type="GO" id="GO:0035627">
    <property type="term" value="P:ceramide transport"/>
    <property type="evidence" value="ECO:0007669"/>
    <property type="project" value="Ensembl"/>
</dbReference>
<dbReference type="GO" id="GO:0030317">
    <property type="term" value="P:flagellated sperm motility"/>
    <property type="evidence" value="ECO:0000315"/>
    <property type="project" value="MGI"/>
</dbReference>
<dbReference type="GO" id="GO:0034375">
    <property type="term" value="P:high-density lipoprotein particle remodeling"/>
    <property type="evidence" value="ECO:0000250"/>
    <property type="project" value="UniProtKB"/>
</dbReference>
<dbReference type="GO" id="GO:0010875">
    <property type="term" value="P:positive regulation of cholesterol efflux"/>
    <property type="evidence" value="ECO:0007669"/>
    <property type="project" value="Ensembl"/>
</dbReference>
<dbReference type="GO" id="GO:0010189">
    <property type="term" value="P:vitamin E biosynthetic process"/>
    <property type="evidence" value="ECO:0000315"/>
    <property type="project" value="MGI"/>
</dbReference>
<dbReference type="CDD" id="cd00025">
    <property type="entry name" value="BPI1"/>
    <property type="match status" value="1"/>
</dbReference>
<dbReference type="CDD" id="cd00026">
    <property type="entry name" value="BPI2"/>
    <property type="match status" value="1"/>
</dbReference>
<dbReference type="FunFam" id="3.15.20.10:FF:000001">
    <property type="entry name" value="Phospholipid transfer protein"/>
    <property type="match status" value="1"/>
</dbReference>
<dbReference type="FunFam" id="3.15.10.10:FF:000001">
    <property type="entry name" value="phospholipid transfer protein-like"/>
    <property type="match status" value="1"/>
</dbReference>
<dbReference type="Gene3D" id="3.15.10.10">
    <property type="entry name" value="Bactericidal permeability-increasing protein, domain 1"/>
    <property type="match status" value="1"/>
</dbReference>
<dbReference type="Gene3D" id="3.15.20.10">
    <property type="entry name" value="Bactericidal permeability-increasing protein, domain 2"/>
    <property type="match status" value="1"/>
</dbReference>
<dbReference type="InterPro" id="IPR017943">
    <property type="entry name" value="Bactericidal_perm-incr_a/b_dom"/>
</dbReference>
<dbReference type="InterPro" id="IPR030675">
    <property type="entry name" value="BPI/LBP"/>
</dbReference>
<dbReference type="InterPro" id="IPR032942">
    <property type="entry name" value="BPI/LBP/Plunc"/>
</dbReference>
<dbReference type="InterPro" id="IPR001124">
    <property type="entry name" value="Lipid-bd_serum_glycop_C"/>
</dbReference>
<dbReference type="InterPro" id="IPR017954">
    <property type="entry name" value="Lipid-bd_serum_glycop_CS"/>
</dbReference>
<dbReference type="InterPro" id="IPR017942">
    <property type="entry name" value="Lipid-bd_serum_glycop_N"/>
</dbReference>
<dbReference type="PANTHER" id="PTHR10504">
    <property type="entry name" value="BACTERICIDAL PERMEABILITY-INCREASING BPI PROTEIN-RELATED"/>
    <property type="match status" value="1"/>
</dbReference>
<dbReference type="PANTHER" id="PTHR10504:SF16">
    <property type="entry name" value="PHOSPHOLIPID TRANSFER PROTEIN"/>
    <property type="match status" value="1"/>
</dbReference>
<dbReference type="Pfam" id="PF01273">
    <property type="entry name" value="LBP_BPI_CETP"/>
    <property type="match status" value="1"/>
</dbReference>
<dbReference type="Pfam" id="PF02886">
    <property type="entry name" value="LBP_BPI_CETP_C"/>
    <property type="match status" value="1"/>
</dbReference>
<dbReference type="PIRSF" id="PIRSF002417">
    <property type="entry name" value="Lipid_binding_protein"/>
    <property type="match status" value="1"/>
</dbReference>
<dbReference type="SMART" id="SM00328">
    <property type="entry name" value="BPI1"/>
    <property type="match status" value="1"/>
</dbReference>
<dbReference type="SMART" id="SM00329">
    <property type="entry name" value="BPI2"/>
    <property type="match status" value="1"/>
</dbReference>
<dbReference type="SUPFAM" id="SSF55394">
    <property type="entry name" value="Bactericidal permeability-increasing protein, BPI"/>
    <property type="match status" value="2"/>
</dbReference>
<dbReference type="PROSITE" id="PS00400">
    <property type="entry name" value="LBP_BPI_CETP"/>
    <property type="match status" value="1"/>
</dbReference>
<accession>P55065</accession>
<accession>Q99L70</accession>
<reference key="1">
    <citation type="journal article" date="1995" name="Biochim. Biophys. Acta">
        <title>Functional expression of human and mouse plasma phospholipid transfer protein: effect of recombinant and plasma PLTP on HDL subspecies.</title>
        <authorList>
            <person name="Albers J.J."/>
            <person name="Wolfbauer G."/>
            <person name="Cheung M.C."/>
            <person name="Day J.R."/>
            <person name="Ching A.F.T."/>
            <person name="Lok S."/>
            <person name="Tu A.-Y."/>
        </authorList>
    </citation>
    <scope>NUCLEOTIDE SEQUENCE [MRNA]</scope>
    <scope>FUNCTION</scope>
    <scope>CATALYTIC ACTIVITY</scope>
    <scope>TISSUE SPECIFICITY</scope>
</reference>
<reference key="2">
    <citation type="journal article" date="1995" name="J. Biol. Chem.">
        <title>Regulation of murine plasma phospholipid transfer protein activity and mRNA levels by lipopolysaccharide and high cholesterol diet.</title>
        <authorList>
            <person name="Jiang X.-C."/>
            <person name="Bruce C."/>
        </authorList>
    </citation>
    <scope>NUCLEOTIDE SEQUENCE [MRNA]</scope>
    <scope>FUNCTION</scope>
    <scope>CATALYTIC ACTIVITY</scope>
    <scope>TISSUE SPECIFICITY</scope>
    <source>
        <strain>C57BL/6J</strain>
    </source>
</reference>
<reference key="3">
    <citation type="journal article" date="2004" name="Genome Res.">
        <title>The status, quality, and expansion of the NIH full-length cDNA project: the Mammalian Gene Collection (MGC).</title>
        <authorList>
            <consortium name="The MGC Project Team"/>
        </authorList>
    </citation>
    <scope>NUCLEOTIDE SEQUENCE [LARGE SCALE MRNA]</scope>
    <source>
        <tissue>Mammary tumor</tissue>
    </source>
</reference>
<reference key="4">
    <citation type="journal article" date="1999" name="J. Clin. Invest.">
        <title>Targeted mutation of plasma phospholipid transfer protein gene markedly reduces high-density lipoprotein levels.</title>
        <authorList>
            <person name="Jiang X.C."/>
            <person name="Bruce C."/>
            <person name="Mar J."/>
            <person name="Lin M."/>
            <person name="Ji Y."/>
            <person name="Francone O.L."/>
            <person name="Tall A.R."/>
        </authorList>
    </citation>
    <scope>FUNCTION</scope>
    <scope>CATALYTIC ACTIVITY</scope>
    <scope>TISSUE SPECIFICITY</scope>
    <scope>DISRUPTION PHENOTYPE</scope>
</reference>
<reference key="5">
    <citation type="journal article" date="2006" name="J. Proteome Res.">
        <title>Proteome-wide characterization of N-glycosylation events by diagonal chromatography.</title>
        <authorList>
            <person name="Ghesquiere B."/>
            <person name="Van Damme J."/>
            <person name="Martens L."/>
            <person name="Vandekerckhove J."/>
            <person name="Gevaert K."/>
        </authorList>
    </citation>
    <scope>GLYCOSYLATION [LARGE SCALE ANALYSIS] AT ASN-64</scope>
    <source>
        <strain>C57BL/6J</strain>
        <tissue>Plasma</tissue>
    </source>
</reference>
<reference key="6">
    <citation type="journal article" date="2010" name="Cell">
        <title>A tissue-specific atlas of mouse protein phosphorylation and expression.</title>
        <authorList>
            <person name="Huttlin E.L."/>
            <person name="Jedrychowski M.P."/>
            <person name="Elias J.E."/>
            <person name="Goswami T."/>
            <person name="Rad R."/>
            <person name="Beausoleil S.A."/>
            <person name="Villen J."/>
            <person name="Haas W."/>
            <person name="Sowa M.E."/>
            <person name="Gygi S.P."/>
        </authorList>
    </citation>
    <scope>IDENTIFICATION BY MASS SPECTROMETRY [LARGE SCALE ANALYSIS]</scope>
    <source>
        <tissue>Brain</tissue>
        <tissue>Lung</tissue>
    </source>
</reference>
<organism>
    <name type="scientific">Mus musculus</name>
    <name type="common">Mouse</name>
    <dbReference type="NCBI Taxonomy" id="10090"/>
    <lineage>
        <taxon>Eukaryota</taxon>
        <taxon>Metazoa</taxon>
        <taxon>Chordata</taxon>
        <taxon>Craniata</taxon>
        <taxon>Vertebrata</taxon>
        <taxon>Euteleostomi</taxon>
        <taxon>Mammalia</taxon>
        <taxon>Eutheria</taxon>
        <taxon>Euarchontoglires</taxon>
        <taxon>Glires</taxon>
        <taxon>Rodentia</taxon>
        <taxon>Myomorpha</taxon>
        <taxon>Muroidea</taxon>
        <taxon>Muridae</taxon>
        <taxon>Murinae</taxon>
        <taxon>Mus</taxon>
        <taxon>Mus</taxon>
    </lineage>
</organism>
<comment type="function">
    <text evidence="1 3 5 6">Mediates the transfer of phospholipids and free cholesterol from triglyceride-rich lipoproteins (low density lipoproteins or LDL and very low density lipoproteins or VLDL) into high-density lipoproteins (HDL) as well as the exchange of phospholipids between triglyceride-rich lipoproteins themselves (PubMed:10079112, PubMed:7615508, PubMed:7654777). Facilitates the transfer of a spectrum of different lipid molecules, including sphingomyelin, phosphatidylcholine, phosphatidylinositol, phosphatidylglycerol, and phosphatidyl ethanolamine (PubMed:10079112). Plays an important role in HDL remodeling which involves modulating the size and composition of HDL (By similarity). Also plays a key role in the uptake of cholesterol from peripheral cells and tissues that is subsequently transported to the liver for degradation and excretion (By similarity). Two distinct forms of PLTP exist in plasma: an active form that can transfer phosphatidylcholine from phospholipid vesicles to HDL, and an inactive form that lacks this capability (By similarity).</text>
</comment>
<comment type="catalytic activity">
    <reaction evidence="5 6">
        <text>a 1,2-diacyl-sn-glycero-3-phosphocholine(in) = a 1,2-diacyl-sn-glycero-3-phosphocholine(out)</text>
        <dbReference type="Rhea" id="RHEA:38571"/>
        <dbReference type="ChEBI" id="CHEBI:57643"/>
    </reaction>
    <physiologicalReaction direction="left-to-right" evidence="9">
        <dbReference type="Rhea" id="RHEA:38572"/>
    </physiologicalReaction>
</comment>
<comment type="catalytic activity">
    <reaction evidence="1">
        <text>a 1,2-diacyl-sn-glycero-3-phosphoethanolamine(in) = a 1,2-diacyl-sn-glycero-3-phosphoethanolamine(out)</text>
        <dbReference type="Rhea" id="RHEA:38895"/>
        <dbReference type="ChEBI" id="CHEBI:64612"/>
    </reaction>
    <physiologicalReaction direction="left-to-right" evidence="1">
        <dbReference type="Rhea" id="RHEA:38896"/>
    </physiologicalReaction>
</comment>
<comment type="catalytic activity">
    <reaction evidence="1">
        <text>a 1,2-diacyl-sn-glycerol(in) = a 1,2-diacyl-sn-glycerol(out)</text>
        <dbReference type="Rhea" id="RHEA:39723"/>
        <dbReference type="ChEBI" id="CHEBI:17815"/>
    </reaction>
    <physiologicalReaction direction="left-to-right" evidence="1">
        <dbReference type="Rhea" id="RHEA:39724"/>
    </physiologicalReaction>
</comment>
<comment type="catalytic activity">
    <reaction evidence="1">
        <text>a 1,2-diacyl-sn-glycero-3-phosphate(in) = a 1,2-diacyl-sn-glycero-3-phosphate(out)</text>
        <dbReference type="Rhea" id="RHEA:36435"/>
        <dbReference type="ChEBI" id="CHEBI:58608"/>
    </reaction>
    <physiologicalReaction direction="left-to-right" evidence="1">
        <dbReference type="Rhea" id="RHEA:36436"/>
    </physiologicalReaction>
</comment>
<comment type="catalytic activity">
    <reaction evidence="1">
        <text>a sphingomyelin(in) = a sphingomyelin(out)</text>
        <dbReference type="Rhea" id="RHEA:39727"/>
        <dbReference type="ChEBI" id="CHEBI:17636"/>
    </reaction>
    <physiologicalReaction direction="left-to-right" evidence="1">
        <dbReference type="Rhea" id="RHEA:39728"/>
    </physiologicalReaction>
</comment>
<comment type="catalytic activity">
    <reaction evidence="1">
        <text>a 1,2-diacyl-sn-glycero-3-phospho-(1'-sn-glycerol)(in) = a 1,2-diacyl-sn-glycero-3-phospho-(1'-sn-glycerol)(out)</text>
        <dbReference type="Rhea" id="RHEA:39743"/>
        <dbReference type="ChEBI" id="CHEBI:64716"/>
    </reaction>
    <physiologicalReaction direction="left-to-right" evidence="1">
        <dbReference type="Rhea" id="RHEA:39744"/>
    </physiologicalReaction>
</comment>
<comment type="catalytic activity">
    <reaction evidence="3">
        <text>a 1,2-diacyl-sn-glycero-3-phospho-(1D-myo-inositol)(in) = a 1,2-diacyl-sn-glycero-3-phospho-(1D-myo-inositol)(out)</text>
        <dbReference type="Rhea" id="RHEA:38691"/>
        <dbReference type="ChEBI" id="CHEBI:57880"/>
    </reaction>
    <physiologicalReaction direction="left-to-right" evidence="8">
        <dbReference type="Rhea" id="RHEA:38692"/>
    </physiologicalReaction>
</comment>
<comment type="catalytic activity">
    <reaction evidence="3">
        <text>1-hexadecanoyl-2-(5Z,8Z,11Z,14Z-eicosatetraenoyl)-sn-glycero-3-phosphoethanolamine(in) = 1-hexadecanoyl-2-(5Z,8Z,11Z,14Z-eicosatetraenoyl)-sn-glycero-3-phosphoethanolamine(out)</text>
        <dbReference type="Rhea" id="RHEA:46492"/>
        <dbReference type="ChEBI" id="CHEBI:73009"/>
    </reaction>
    <physiologicalReaction direction="left-to-right" evidence="8">
        <dbReference type="Rhea" id="RHEA:46493"/>
    </physiologicalReaction>
</comment>
<comment type="catalytic activity">
    <reaction evidence="3">
        <text>N-(hexadecanoyl)-sphing-4-enine-1-phosphocholine(in) = N-(hexadecanoyl)-sphing-4-enine-1-phosphocholine(out)</text>
        <dbReference type="Rhea" id="RHEA:46496"/>
        <dbReference type="ChEBI" id="CHEBI:78646"/>
    </reaction>
    <physiologicalReaction direction="left-to-right" evidence="8">
        <dbReference type="Rhea" id="RHEA:46497"/>
    </physiologicalReaction>
</comment>
<comment type="catalytic activity">
    <reaction evidence="3">
        <text>1,2-dihexadecanoyl-sn-glycero-3-phosphocholine(in) = 1,2-dihexadecanoyl-sn-glycero-3-phosphocholine(out)</text>
        <dbReference type="Rhea" id="RHEA:46488"/>
        <dbReference type="ChEBI" id="CHEBI:72999"/>
    </reaction>
    <physiologicalReaction direction="left-to-right" evidence="8">
        <dbReference type="Rhea" id="RHEA:46489"/>
    </physiologicalReaction>
</comment>
<comment type="subcellular location">
    <subcellularLocation>
        <location evidence="1">Secreted</location>
    </subcellularLocation>
    <subcellularLocation>
        <location evidence="1">Nucleus</location>
    </subcellularLocation>
    <text evidence="1">Nuclear export is XPO1/CRM1-dependent.</text>
</comment>
<comment type="tissue specificity">
    <text evidence="3 5 6">Highest level expression in the lung, brain and heart with relatively low levels in the liver, skeletal muscle and testis and very low levels found in the spleen and kidney.</text>
</comment>
<comment type="PTM">
    <text evidence="1">Glycosylation is necessary for secretion and its phospholipid transfer activity.</text>
</comment>
<comment type="disruption phenotype">
    <text evidence="3">Mice show a complete loss of phosphatidylcholine, phosphatidylethanolamine, phosphatidylinositol and sphingomyelin transfer activities, and a partial loss of free cholesterol transfer activity (PubMed:10079112). Transfer of VLDL phospholipid into HDL is abolished (PubMed:10079112). A marked reduction in the levels of plasma HDL phospholipid, cholesteryl ester and free cholesterol seen, whereas the levels of non-HDL lipids are not significantly altered (PubMed:10079112).</text>
</comment>
<comment type="similarity">
    <text evidence="7">Belongs to the BPI/LBP/Plunc superfamily. BPI/LBP family.</text>
</comment>
<keyword id="KW-1015">Disulfide bond</keyword>
<keyword id="KW-0325">Glycoprotein</keyword>
<keyword id="KW-0445">Lipid transport</keyword>
<keyword id="KW-0539">Nucleus</keyword>
<keyword id="KW-1185">Reference proteome</keyword>
<keyword id="KW-0964">Secreted</keyword>
<keyword id="KW-0732">Signal</keyword>
<keyword id="KW-0813">Transport</keyword>
<name>PLTP_MOUSE</name>
<sequence length="493" mass="54453">MVLLWALFLALLAGAHAELPGCKIRVTSAALDLVKQEGLRFLEQELETITIPDVYGAKGHFYYNISDVRVTQLHLISSELHFQPDQDLLLNISNASLGLHFRRQLLYWFLYDGGYINASAEGVSIRTGLQLSQDSSGRIKVSNVSCEASVSKMNMAFGGTFRRMYNFFSTFITSGMRFLLNQQICPVLYHAGTVLLNSLLDTVPVRSSVDDLVGIDYSLLKDPVVSNGNLDMEFRGAFFPLKEDNWSLPNRAVEPQLEDDERMVYVAFSEFFFDSAMESYFQAGALQLTLVGDKVPSDLDMLLRATYFGSIVLLSPTVINSPLKLKLEATSPPRCTIKPSGTTISITASVTITLAPPMLPEVELSKMIMEGRLSAKLTLRGKALRVKLDLRRFQIYSNQSALESLALIPLQAPLKTLLQIGVMPLLNERTWRGVQIPLPEGINFVREVVTNHAGFVTVGADLHFAKGLREVIDKNRPADVAASHVPPPSAAAA</sequence>
<gene>
    <name type="primary">Pltp</name>
</gene>
<proteinExistence type="evidence at protein level"/>
<feature type="signal peptide" evidence="2">
    <location>
        <begin position="1"/>
        <end position="17"/>
    </location>
</feature>
<feature type="chain" id="PRO_0000017163" description="Phospholipid transfer protein">
    <location>
        <begin position="18"/>
        <end position="493"/>
    </location>
</feature>
<feature type="glycosylation site" description="N-linked (GlcNAc...) asparagine" evidence="4">
    <location>
        <position position="64"/>
    </location>
</feature>
<feature type="glycosylation site" description="N-linked (GlcNAc...) asparagine" evidence="2">
    <location>
        <position position="91"/>
    </location>
</feature>
<feature type="glycosylation site" description="N-linked (GlcNAc...) asparagine" evidence="2">
    <location>
        <position position="94"/>
    </location>
</feature>
<feature type="glycosylation site" description="N-linked (GlcNAc...) asparagine" evidence="2">
    <location>
        <position position="117"/>
    </location>
</feature>
<feature type="glycosylation site" description="N-linked (GlcNAc...) asparagine" evidence="2">
    <location>
        <position position="143"/>
    </location>
</feature>
<feature type="glycosylation site" description="N-linked (GlcNAc...) asparagine" evidence="2">
    <location>
        <position position="245"/>
    </location>
</feature>
<feature type="glycosylation site" description="N-linked (GlcNAc...) asparagine" evidence="2">
    <location>
        <position position="398"/>
    </location>
</feature>
<feature type="disulfide bond" evidence="1">
    <location>
        <begin position="146"/>
        <end position="185"/>
    </location>
</feature>
<feature type="sequence conflict" description="In Ref. 2." evidence="7" ref="2">
    <location>
        <begin position="16"/>
        <end position="17"/>
    </location>
</feature>
<feature type="sequence conflict" description="In Ref. 3; AAH03782." evidence="7" ref="3">
    <original>D</original>
    <variation>E</variation>
    <location>
        <position position="32"/>
    </location>
</feature>
<feature type="sequence conflict" description="In Ref. 2; AAA87943." evidence="7" ref="2">
    <original>DV</original>
    <variation>ER</variation>
    <location>
        <begin position="53"/>
        <end position="54"/>
    </location>
</feature>
<feature type="sequence conflict" description="In Ref. 2; AAA87943." evidence="7" ref="2">
    <original>R</original>
    <variation>S</variation>
    <location>
        <position position="103"/>
    </location>
</feature>
<feature type="sequence conflict" description="In Ref. 2; AAA87943." evidence="7" ref="2">
    <original>L</original>
    <variation>P</variation>
    <location>
        <position position="106"/>
    </location>
</feature>
<feature type="sequence conflict" description="In Ref. 2; AAA87943." evidence="7" ref="2">
    <original>A</original>
    <variation>D</variation>
    <location>
        <position position="156"/>
    </location>
</feature>
<feature type="sequence conflict" description="In Ref. 2; AAA87943." evidence="7" ref="2">
    <original>KED</original>
    <variation>RRN</variation>
    <location>
        <begin position="242"/>
        <end position="244"/>
    </location>
</feature>
<feature type="sequence conflict" description="In Ref. 2; AAA87943." evidence="7" ref="2">
    <original>K</original>
    <variation>M</variation>
    <location>
        <position position="326"/>
    </location>
</feature>
<feature type="sequence conflict" description="In Ref. 2; AAA87943." evidence="7" ref="2">
    <original>F</original>
    <variation>L</variation>
    <location>
        <position position="464"/>
    </location>
</feature>
<protein>
    <recommendedName>
        <fullName>Phospholipid transfer protein</fullName>
    </recommendedName>
    <alternativeName>
        <fullName>Lipid transfer protein II</fullName>
    </alternativeName>
</protein>